<accession>A1AGA6</accession>
<dbReference type="EMBL" id="CP000468">
    <property type="protein sequence ID" value="ABJ02696.1"/>
    <property type="molecule type" value="Genomic_DNA"/>
</dbReference>
<dbReference type="RefSeq" id="WP_000243743.1">
    <property type="nucleotide sequence ID" value="NC_008563.1"/>
</dbReference>
<dbReference type="SMR" id="A1AGA6"/>
<dbReference type="KEGG" id="ecv:APECO1_3230"/>
<dbReference type="HOGENOM" id="CLU_059558_1_1_6"/>
<dbReference type="Proteomes" id="UP000008216">
    <property type="component" value="Chromosome"/>
</dbReference>
<dbReference type="GO" id="GO:0005524">
    <property type="term" value="F:ATP binding"/>
    <property type="evidence" value="ECO:0007669"/>
    <property type="project" value="UniProtKB-UniRule"/>
</dbReference>
<dbReference type="GO" id="GO:0005525">
    <property type="term" value="F:GTP binding"/>
    <property type="evidence" value="ECO:0007669"/>
    <property type="project" value="UniProtKB-UniRule"/>
</dbReference>
<dbReference type="GO" id="GO:0003723">
    <property type="term" value="F:RNA binding"/>
    <property type="evidence" value="ECO:0007669"/>
    <property type="project" value="UniProtKB-KW"/>
</dbReference>
<dbReference type="Gene3D" id="3.40.50.300">
    <property type="entry name" value="P-loop containing nucleotide triphosphate hydrolases"/>
    <property type="match status" value="1"/>
</dbReference>
<dbReference type="HAMAP" id="MF_00636">
    <property type="entry name" value="RapZ_like"/>
    <property type="match status" value="1"/>
</dbReference>
<dbReference type="InterPro" id="IPR027417">
    <property type="entry name" value="P-loop_NTPase"/>
</dbReference>
<dbReference type="InterPro" id="IPR005337">
    <property type="entry name" value="RapZ-like"/>
</dbReference>
<dbReference type="InterPro" id="IPR053930">
    <property type="entry name" value="RapZ-like_N"/>
</dbReference>
<dbReference type="InterPro" id="IPR053931">
    <property type="entry name" value="RapZ_C"/>
</dbReference>
<dbReference type="NCBIfam" id="NF003828">
    <property type="entry name" value="PRK05416.1"/>
    <property type="match status" value="1"/>
</dbReference>
<dbReference type="PANTHER" id="PTHR30448">
    <property type="entry name" value="RNASE ADAPTER PROTEIN RAPZ"/>
    <property type="match status" value="1"/>
</dbReference>
<dbReference type="PANTHER" id="PTHR30448:SF0">
    <property type="entry name" value="RNASE ADAPTER PROTEIN RAPZ"/>
    <property type="match status" value="1"/>
</dbReference>
<dbReference type="Pfam" id="PF22740">
    <property type="entry name" value="PapZ_C"/>
    <property type="match status" value="1"/>
</dbReference>
<dbReference type="Pfam" id="PF03668">
    <property type="entry name" value="RapZ-like_N"/>
    <property type="match status" value="1"/>
</dbReference>
<dbReference type="PIRSF" id="PIRSF005052">
    <property type="entry name" value="P-loopkin"/>
    <property type="match status" value="1"/>
</dbReference>
<dbReference type="SUPFAM" id="SSF52540">
    <property type="entry name" value="P-loop containing nucleoside triphosphate hydrolases"/>
    <property type="match status" value="1"/>
</dbReference>
<sequence length="284" mass="32460">MVLMIVSGRSGSGKSVALRALEDMGFYCVDNLPVVLLPDLARTLADREISAAVSIDVRNMPESPEIFEQAMSNLPDAFSPQLLFLDADRNTLIRRYSDTRRLHPLSSKNLSLESAIDKESDLLEPLRSRADLIVDTSEMSVHELAEMLRTRLLGKRERELTMVFESFGFKHGIPIDADYVFDVRFLPNPHWDPKLRPMTGLDKPVAAFLDRHTEVHNFIYQTRSYLELWLPVLETNNRSYLTVAIGCTGGKHRSVYIAEQLADYFRSRGKNVQSRHRTLEKRKP</sequence>
<organism>
    <name type="scientific">Escherichia coli O1:K1 / APEC</name>
    <dbReference type="NCBI Taxonomy" id="405955"/>
    <lineage>
        <taxon>Bacteria</taxon>
        <taxon>Pseudomonadati</taxon>
        <taxon>Pseudomonadota</taxon>
        <taxon>Gammaproteobacteria</taxon>
        <taxon>Enterobacterales</taxon>
        <taxon>Enterobacteriaceae</taxon>
        <taxon>Escherichia</taxon>
    </lineage>
</organism>
<evidence type="ECO:0000255" key="1">
    <source>
        <dbReference type="HAMAP-Rule" id="MF_00636"/>
    </source>
</evidence>
<keyword id="KW-0067">ATP-binding</keyword>
<keyword id="KW-0342">GTP-binding</keyword>
<keyword id="KW-0547">Nucleotide-binding</keyword>
<keyword id="KW-1185">Reference proteome</keyword>
<keyword id="KW-0694">RNA-binding</keyword>
<gene>
    <name evidence="1" type="primary">rapZ</name>
    <name type="ordered locus">Ecok1_32020</name>
    <name type="ORF">APECO1_3230</name>
</gene>
<proteinExistence type="inferred from homology"/>
<protein>
    <recommendedName>
        <fullName evidence="1">RNase adapter protein RapZ</fullName>
    </recommendedName>
</protein>
<comment type="function">
    <text evidence="1">Modulates the synthesis of GlmS, by affecting the processing and stability of the regulatory small RNA GlmZ. When glucosamine-6-phosphate (GlcN6P) concentrations are high in the cell, RapZ binds GlmZ and targets it to cleavage by RNase E. Consequently, GlmZ is inactivated and unable to activate GlmS synthesis. Under low GlcN6P concentrations, RapZ is sequestered and inactivated by an other regulatory small RNA, GlmY, preventing GlmZ degradation and leading to synthesis of GlmS.</text>
</comment>
<comment type="subunit">
    <text evidence="1">Homotrimer.</text>
</comment>
<comment type="similarity">
    <text evidence="1">Belongs to the RapZ-like family. RapZ subfamily.</text>
</comment>
<reference key="1">
    <citation type="journal article" date="2007" name="J. Bacteriol.">
        <title>The genome sequence of avian pathogenic Escherichia coli strain O1:K1:H7 shares strong similarities with human extraintestinal pathogenic E. coli genomes.</title>
        <authorList>
            <person name="Johnson T.J."/>
            <person name="Kariyawasam S."/>
            <person name="Wannemuehler Y."/>
            <person name="Mangiamele P."/>
            <person name="Johnson S.J."/>
            <person name="Doetkott C."/>
            <person name="Skyberg J.A."/>
            <person name="Lynne A.M."/>
            <person name="Johnson J.R."/>
            <person name="Nolan L.K."/>
        </authorList>
    </citation>
    <scope>NUCLEOTIDE SEQUENCE [LARGE SCALE GENOMIC DNA]</scope>
</reference>
<name>RAPZ_ECOK1</name>
<feature type="chain" id="PRO_1000056821" description="RNase adapter protein RapZ">
    <location>
        <begin position="1"/>
        <end position="284"/>
    </location>
</feature>
<feature type="region of interest" description="RNA-binding" evidence="1">
    <location>
        <begin position="266"/>
        <end position="284"/>
    </location>
</feature>
<feature type="binding site" evidence="1">
    <location>
        <begin position="8"/>
        <end position="15"/>
    </location>
    <ligand>
        <name>ATP</name>
        <dbReference type="ChEBI" id="CHEBI:30616"/>
    </ligand>
</feature>
<feature type="binding site" evidence="1">
    <location>
        <begin position="56"/>
        <end position="59"/>
    </location>
    <ligand>
        <name>GTP</name>
        <dbReference type="ChEBI" id="CHEBI:37565"/>
    </ligand>
</feature>